<evidence type="ECO:0000255" key="1">
    <source>
        <dbReference type="HAMAP-Rule" id="MF_00218"/>
    </source>
</evidence>
<evidence type="ECO:0000305" key="2"/>
<name>DCUP_BACAH</name>
<feature type="chain" id="PRO_0000325628" description="Uroporphyrinogen decarboxylase">
    <location>
        <begin position="1"/>
        <end position="348"/>
    </location>
</feature>
<feature type="binding site" evidence="1">
    <location>
        <begin position="27"/>
        <end position="31"/>
    </location>
    <ligand>
        <name>substrate</name>
    </ligand>
</feature>
<feature type="binding site" evidence="1">
    <location>
        <position position="46"/>
    </location>
    <ligand>
        <name>substrate</name>
    </ligand>
</feature>
<feature type="binding site" evidence="1">
    <location>
        <position position="76"/>
    </location>
    <ligand>
        <name>substrate</name>
    </ligand>
</feature>
<feature type="binding site" evidence="1">
    <location>
        <position position="152"/>
    </location>
    <ligand>
        <name>substrate</name>
    </ligand>
</feature>
<feature type="binding site" evidence="1">
    <location>
        <position position="207"/>
    </location>
    <ligand>
        <name>substrate</name>
    </ligand>
</feature>
<feature type="binding site" evidence="1">
    <location>
        <position position="320"/>
    </location>
    <ligand>
        <name>substrate</name>
    </ligand>
</feature>
<feature type="site" description="Transition state stabilizer" evidence="1">
    <location>
        <position position="76"/>
    </location>
</feature>
<accession>A0RAS3</accession>
<keyword id="KW-0963">Cytoplasm</keyword>
<keyword id="KW-0210">Decarboxylase</keyword>
<keyword id="KW-0456">Lyase</keyword>
<keyword id="KW-0627">Porphyrin biosynthesis</keyword>
<gene>
    <name evidence="1" type="primary">hemE</name>
    <name type="ordered locus">BALH_0950</name>
</gene>
<organism>
    <name type="scientific">Bacillus thuringiensis (strain Al Hakam)</name>
    <dbReference type="NCBI Taxonomy" id="412694"/>
    <lineage>
        <taxon>Bacteria</taxon>
        <taxon>Bacillati</taxon>
        <taxon>Bacillota</taxon>
        <taxon>Bacilli</taxon>
        <taxon>Bacillales</taxon>
        <taxon>Bacillaceae</taxon>
        <taxon>Bacillus</taxon>
        <taxon>Bacillus cereus group</taxon>
    </lineage>
</organism>
<comment type="function">
    <text evidence="1">Catalyzes the decarboxylation of four acetate groups of uroporphyrinogen-III to yield coproporphyrinogen-III.</text>
</comment>
<comment type="catalytic activity">
    <reaction evidence="1">
        <text>uroporphyrinogen III + 4 H(+) = coproporphyrinogen III + 4 CO2</text>
        <dbReference type="Rhea" id="RHEA:19865"/>
        <dbReference type="ChEBI" id="CHEBI:15378"/>
        <dbReference type="ChEBI" id="CHEBI:16526"/>
        <dbReference type="ChEBI" id="CHEBI:57308"/>
        <dbReference type="ChEBI" id="CHEBI:57309"/>
        <dbReference type="EC" id="4.1.1.37"/>
    </reaction>
</comment>
<comment type="pathway">
    <text evidence="1">Porphyrin-containing compound metabolism; protoporphyrin-IX biosynthesis; coproporphyrinogen-III from 5-aminolevulinate: step 4/4.</text>
</comment>
<comment type="subunit">
    <text evidence="1">Homodimer.</text>
</comment>
<comment type="subcellular location">
    <subcellularLocation>
        <location evidence="1">Cytoplasm</location>
    </subcellularLocation>
</comment>
<comment type="similarity">
    <text evidence="1">Belongs to the uroporphyrinogen decarboxylase family.</text>
</comment>
<comment type="sequence caution" evidence="2">
    <conflict type="erroneous initiation">
        <sequence resource="EMBL-CDS" id="ABK84316"/>
    </conflict>
</comment>
<proteinExistence type="inferred from homology"/>
<protein>
    <recommendedName>
        <fullName evidence="1">Uroporphyrinogen decarboxylase</fullName>
        <shortName evidence="1">UPD</shortName>
        <shortName evidence="1">URO-D</shortName>
        <ecNumber evidence="1">4.1.1.37</ecNumber>
    </recommendedName>
</protein>
<reference key="1">
    <citation type="journal article" date="2007" name="J. Bacteriol.">
        <title>The complete genome sequence of Bacillus thuringiensis Al Hakam.</title>
        <authorList>
            <person name="Challacombe J.F."/>
            <person name="Altherr M.R."/>
            <person name="Xie G."/>
            <person name="Bhotika S.S."/>
            <person name="Brown N."/>
            <person name="Bruce D."/>
            <person name="Campbell C.S."/>
            <person name="Campbell M.L."/>
            <person name="Chen J."/>
            <person name="Chertkov O."/>
            <person name="Cleland C."/>
            <person name="Dimitrijevic M."/>
            <person name="Doggett N.A."/>
            <person name="Fawcett J.J."/>
            <person name="Glavina T."/>
            <person name="Goodwin L.A."/>
            <person name="Green L.D."/>
            <person name="Han C.S."/>
            <person name="Hill K.K."/>
            <person name="Hitchcock P."/>
            <person name="Jackson P.J."/>
            <person name="Keim P."/>
            <person name="Kewalramani A.R."/>
            <person name="Longmire J."/>
            <person name="Lucas S."/>
            <person name="Malfatti S."/>
            <person name="Martinez D."/>
            <person name="McMurry K."/>
            <person name="Meincke L.J."/>
            <person name="Misra M."/>
            <person name="Moseman B.L."/>
            <person name="Mundt M."/>
            <person name="Munk A.C."/>
            <person name="Okinaka R.T."/>
            <person name="Parson-Quintana B."/>
            <person name="Reilly L.P."/>
            <person name="Richardson P."/>
            <person name="Robinson D.L."/>
            <person name="Saunders E."/>
            <person name="Tapia R."/>
            <person name="Tesmer J.G."/>
            <person name="Thayer N."/>
            <person name="Thompson L.S."/>
            <person name="Tice H."/>
            <person name="Ticknor L.O."/>
            <person name="Wills P.L."/>
            <person name="Gilna P."/>
            <person name="Brettin T.S."/>
        </authorList>
    </citation>
    <scope>NUCLEOTIDE SEQUENCE [LARGE SCALE GENOMIC DNA]</scope>
    <source>
        <strain>Al Hakam</strain>
    </source>
</reference>
<dbReference type="EC" id="4.1.1.37" evidence="1"/>
<dbReference type="EMBL" id="CP000485">
    <property type="protein sequence ID" value="ABK84316.1"/>
    <property type="status" value="ALT_INIT"/>
    <property type="molecule type" value="Genomic_DNA"/>
</dbReference>
<dbReference type="RefSeq" id="WP_000252614.1">
    <property type="nucleotide sequence ID" value="NC_008600.1"/>
</dbReference>
<dbReference type="SMR" id="A0RAS3"/>
<dbReference type="GeneID" id="75084376"/>
<dbReference type="KEGG" id="btl:BALH_0950"/>
<dbReference type="HOGENOM" id="CLU_040933_0_1_9"/>
<dbReference type="UniPathway" id="UPA00251">
    <property type="reaction ID" value="UER00321"/>
</dbReference>
<dbReference type="GO" id="GO:0005829">
    <property type="term" value="C:cytosol"/>
    <property type="evidence" value="ECO:0007669"/>
    <property type="project" value="TreeGrafter"/>
</dbReference>
<dbReference type="GO" id="GO:0004853">
    <property type="term" value="F:uroporphyrinogen decarboxylase activity"/>
    <property type="evidence" value="ECO:0007669"/>
    <property type="project" value="UniProtKB-UniRule"/>
</dbReference>
<dbReference type="GO" id="GO:0006782">
    <property type="term" value="P:protoporphyrinogen IX biosynthetic process"/>
    <property type="evidence" value="ECO:0007669"/>
    <property type="project" value="UniProtKB-UniRule"/>
</dbReference>
<dbReference type="CDD" id="cd00717">
    <property type="entry name" value="URO-D"/>
    <property type="match status" value="1"/>
</dbReference>
<dbReference type="FunFam" id="3.20.20.210:FF:000005">
    <property type="entry name" value="Uroporphyrinogen decarboxylase"/>
    <property type="match status" value="1"/>
</dbReference>
<dbReference type="Gene3D" id="3.20.20.210">
    <property type="match status" value="1"/>
</dbReference>
<dbReference type="HAMAP" id="MF_00218">
    <property type="entry name" value="URO_D"/>
    <property type="match status" value="1"/>
</dbReference>
<dbReference type="InterPro" id="IPR038071">
    <property type="entry name" value="UROD/MetE-like_sf"/>
</dbReference>
<dbReference type="InterPro" id="IPR006361">
    <property type="entry name" value="Uroporphyrinogen_deCO2ase_HemE"/>
</dbReference>
<dbReference type="InterPro" id="IPR000257">
    <property type="entry name" value="Uroporphyrinogen_deCOase"/>
</dbReference>
<dbReference type="NCBIfam" id="TIGR01464">
    <property type="entry name" value="hemE"/>
    <property type="match status" value="1"/>
</dbReference>
<dbReference type="PANTHER" id="PTHR21091">
    <property type="entry name" value="METHYLTETRAHYDROFOLATE:HOMOCYSTEINE METHYLTRANSFERASE RELATED"/>
    <property type="match status" value="1"/>
</dbReference>
<dbReference type="PANTHER" id="PTHR21091:SF169">
    <property type="entry name" value="UROPORPHYRINOGEN DECARBOXYLASE"/>
    <property type="match status" value="1"/>
</dbReference>
<dbReference type="Pfam" id="PF01208">
    <property type="entry name" value="URO-D"/>
    <property type="match status" value="1"/>
</dbReference>
<dbReference type="SUPFAM" id="SSF51726">
    <property type="entry name" value="UROD/MetE-like"/>
    <property type="match status" value="1"/>
</dbReference>
<dbReference type="PROSITE" id="PS00906">
    <property type="entry name" value="UROD_1"/>
    <property type="match status" value="1"/>
</dbReference>
<dbReference type="PROSITE" id="PS00907">
    <property type="entry name" value="UROD_2"/>
    <property type="match status" value="1"/>
</dbReference>
<sequence length="348" mass="39212">MVRTINETFLKACRGERTDYVPAWYMRQAGRSQPEYRKIKEKYSLFEITHNPELCAYVTKLPVDQYNVDAAILYKDIMSPLPAIGVDVEIKSGIGPVIDNPIRSLQDVEKLGEINPEDDVPYILDTIRLLTTEMLDVPLIGFSGAPFTLASYMIEGGPSRNYHNTKAFMYAEPKAWFALMDKLADMVITYLKAQINAGAKAVQIFDSWVGTVNVADYRVFIKPAMERIFAEVRTMGVPMIMHGVGAAHLVNEWHDLPLDVVGLDWRLPIEEARARGVHKAVQGNMDPSFLLAPWSVIEEHVKGILDQGMKQPGYIFNLGHGVFPEVNPDTLKRLTTFIHEYSKGQLAK</sequence>